<organism>
    <name type="scientific">Arabidopsis thaliana</name>
    <name type="common">Mouse-ear cress</name>
    <dbReference type="NCBI Taxonomy" id="3702"/>
    <lineage>
        <taxon>Eukaryota</taxon>
        <taxon>Viridiplantae</taxon>
        <taxon>Streptophyta</taxon>
        <taxon>Embryophyta</taxon>
        <taxon>Tracheophyta</taxon>
        <taxon>Spermatophyta</taxon>
        <taxon>Magnoliopsida</taxon>
        <taxon>eudicotyledons</taxon>
        <taxon>Gunneridae</taxon>
        <taxon>Pentapetalae</taxon>
        <taxon>rosids</taxon>
        <taxon>malvids</taxon>
        <taxon>Brassicales</taxon>
        <taxon>Brassicaceae</taxon>
        <taxon>Camelineae</taxon>
        <taxon>Arabidopsis</taxon>
    </lineage>
</organism>
<protein>
    <recommendedName>
        <fullName evidence="5">O-fucosyltransferase 28</fullName>
        <shortName evidence="5">O-FucT-28</shortName>
        <ecNumber evidence="5">2.4.1.-</ecNumber>
    </recommendedName>
    <alternativeName>
        <fullName evidence="7">O-fucosyltransferase family protein</fullName>
    </alternativeName>
</protein>
<accession>Q9M393</accession>
<proteinExistence type="evidence at transcript level"/>
<name>OFT28_ARATH</name>
<gene>
    <name evidence="5" type="primary">OFUT28</name>
    <name evidence="6" type="ordered locus">At3g54100</name>
    <name evidence="8" type="ORF">F24B22.60</name>
</gene>
<sequence>MSVVGAINPVPIAPTTRRRVGDSLDVISERPSNSSDYCNTINQPIVGSTDLDGGDATGQDSSPSSESSASSTGSHYHHDHYHRFYSHPVIRYLLLRKFWIPFYGGASTVVIGQGFRSGRNVGRRILGLLMLLVVASVFLRVYLMGGVRVVDHARLKEFVVVRTLRDDWSMAQREVAENQASSQPMRVLEKLPIPEIWQKPESGNYRQCVTRPKNYTRLQRQTNGYLVVHANGGLNQMRTGICDMVAVAKIMNATLVLPLLDHESFWTDPSTFKDIFDWRNFMNVLKHDVDIVEYLPPQYAAMKPLLKAPVSWSKASYYRSEMLPLLKRHKVLKFTLTDSRLANNGLPPSIQRLRCRANYQALLYTKEIEDLGKILVNRLRNNTEPYIALHLRYEKDMLAFTGCNHNLTTEEAEELRIMRYSVKHWKEKEIDSRERRIQGGCPMSPREAAIFLKAMGYPSSTTVYIVAGEIYGSESMDAFRAEYPNVFSHSTLATEEELEPFSQYQNRLAALDYIVALESDVFVYTYDGNMAKAVQGHRKFEGFRKSINPDRLNFVRLIDHFDEGIISWEEFSSEVKRLNRDRIGAAYGRLPAALPRLEENFYANPQPDCICNKSHPEQLRKQSSLRTDSKSWKKSALR</sequence>
<keyword id="KW-0119">Carbohydrate metabolism</keyword>
<keyword id="KW-0294">Fucose metabolism</keyword>
<keyword id="KW-0325">Glycoprotein</keyword>
<keyword id="KW-0328">Glycosyltransferase</keyword>
<keyword id="KW-0472">Membrane</keyword>
<keyword id="KW-1185">Reference proteome</keyword>
<keyword id="KW-0735">Signal-anchor</keyword>
<keyword id="KW-0808">Transferase</keyword>
<keyword id="KW-0812">Transmembrane</keyword>
<keyword id="KW-1133">Transmembrane helix</keyword>
<dbReference type="EC" id="2.4.1.-" evidence="5"/>
<dbReference type="EMBL" id="KY906070">
    <property type="protein sequence ID" value="ARJ31434.1"/>
    <property type="molecule type" value="mRNA"/>
</dbReference>
<dbReference type="EMBL" id="AL132957">
    <property type="protein sequence ID" value="CAB70984.1"/>
    <property type="molecule type" value="Genomic_DNA"/>
</dbReference>
<dbReference type="EMBL" id="CP002686">
    <property type="protein sequence ID" value="AEE79188.1"/>
    <property type="molecule type" value="Genomic_DNA"/>
</dbReference>
<dbReference type="EMBL" id="BX823589">
    <property type="status" value="NOT_ANNOTATED_CDS"/>
    <property type="molecule type" value="mRNA"/>
</dbReference>
<dbReference type="PIR" id="T47569">
    <property type="entry name" value="T47569"/>
</dbReference>
<dbReference type="RefSeq" id="NP_190978.1">
    <property type="nucleotide sequence ID" value="NM_115270.5"/>
</dbReference>
<dbReference type="FunCoup" id="Q9M393">
    <property type="interactions" value="1592"/>
</dbReference>
<dbReference type="STRING" id="3702.Q9M393"/>
<dbReference type="GlyCosmos" id="Q9M393">
    <property type="glycosylation" value="5 sites, No reported glycans"/>
</dbReference>
<dbReference type="GlyGen" id="Q9M393">
    <property type="glycosylation" value="5 sites"/>
</dbReference>
<dbReference type="PaxDb" id="3702-AT3G54100.1"/>
<dbReference type="ProteomicsDB" id="238931"/>
<dbReference type="EnsemblPlants" id="AT3G54100.1">
    <property type="protein sequence ID" value="AT3G54100.1"/>
    <property type="gene ID" value="AT3G54100"/>
</dbReference>
<dbReference type="GeneID" id="824577"/>
<dbReference type="Gramene" id="AT3G54100.1">
    <property type="protein sequence ID" value="AT3G54100.1"/>
    <property type="gene ID" value="AT3G54100"/>
</dbReference>
<dbReference type="KEGG" id="ath:AT3G54100"/>
<dbReference type="Araport" id="AT3G54100"/>
<dbReference type="TAIR" id="AT3G54100"/>
<dbReference type="eggNOG" id="ENOG502QQ4D">
    <property type="taxonomic scope" value="Eukaryota"/>
</dbReference>
<dbReference type="HOGENOM" id="CLU_018420_7_0_1"/>
<dbReference type="InParanoid" id="Q9M393"/>
<dbReference type="OMA" id="ECGHGHP"/>
<dbReference type="PhylomeDB" id="Q9M393"/>
<dbReference type="PRO" id="PR:Q9M393"/>
<dbReference type="Proteomes" id="UP000006548">
    <property type="component" value="Chromosome 3"/>
</dbReference>
<dbReference type="ExpressionAtlas" id="Q9M393">
    <property type="expression patterns" value="baseline and differential"/>
</dbReference>
<dbReference type="GO" id="GO:0016020">
    <property type="term" value="C:membrane"/>
    <property type="evidence" value="ECO:0007669"/>
    <property type="project" value="UniProtKB-SubCell"/>
</dbReference>
<dbReference type="GO" id="GO:0016757">
    <property type="term" value="F:glycosyltransferase activity"/>
    <property type="evidence" value="ECO:0007669"/>
    <property type="project" value="UniProtKB-KW"/>
</dbReference>
<dbReference type="GO" id="GO:0006004">
    <property type="term" value="P:fucose metabolic process"/>
    <property type="evidence" value="ECO:0007669"/>
    <property type="project" value="UniProtKB-KW"/>
</dbReference>
<dbReference type="CDD" id="cd11299">
    <property type="entry name" value="O-FucT_plant"/>
    <property type="match status" value="1"/>
</dbReference>
<dbReference type="FunFam" id="3.40.50.11350:FF:000011">
    <property type="entry name" value="O-fucosyltransferase 28"/>
    <property type="match status" value="1"/>
</dbReference>
<dbReference type="Gene3D" id="3.40.50.11350">
    <property type="match status" value="1"/>
</dbReference>
<dbReference type="InterPro" id="IPR024709">
    <property type="entry name" value="FucosylTrfase_pln"/>
</dbReference>
<dbReference type="InterPro" id="IPR019378">
    <property type="entry name" value="GDP-Fuc_O-FucTrfase"/>
</dbReference>
<dbReference type="PANTHER" id="PTHR31741:SF4">
    <property type="entry name" value="O-FUCOSYLTRANSFERASE 28"/>
    <property type="match status" value="1"/>
</dbReference>
<dbReference type="PANTHER" id="PTHR31741">
    <property type="entry name" value="OS02G0726500 PROTEIN-RELATED"/>
    <property type="match status" value="1"/>
</dbReference>
<dbReference type="Pfam" id="PF10250">
    <property type="entry name" value="O-FucT"/>
    <property type="match status" value="1"/>
</dbReference>
<evidence type="ECO:0000250" key="1">
    <source>
        <dbReference type="UniProtKB" id="Q9H488"/>
    </source>
</evidence>
<evidence type="ECO:0000255" key="2"/>
<evidence type="ECO:0000255" key="3">
    <source>
        <dbReference type="PROSITE-ProRule" id="PRU00498"/>
    </source>
</evidence>
<evidence type="ECO:0000256" key="4">
    <source>
        <dbReference type="SAM" id="MobiDB-lite"/>
    </source>
</evidence>
<evidence type="ECO:0000305" key="5"/>
<evidence type="ECO:0000312" key="6">
    <source>
        <dbReference type="Araport" id="AT3G54100"/>
    </source>
</evidence>
<evidence type="ECO:0000312" key="7">
    <source>
        <dbReference type="EMBL" id="ARJ31434.1"/>
    </source>
</evidence>
<evidence type="ECO:0000312" key="8">
    <source>
        <dbReference type="EMBL" id="CAB70984.1"/>
    </source>
</evidence>
<comment type="pathway">
    <text evidence="5">Glycan metabolism.</text>
</comment>
<comment type="subcellular location">
    <subcellularLocation>
        <location evidence="2">Membrane</location>
        <topology evidence="5">Single-pass type II membrane protein</topology>
    </subcellularLocation>
</comment>
<comment type="similarity">
    <text evidence="5">Belongs to the glycosyltransferase GT106 family.</text>
</comment>
<comment type="sequence caution" evidence="5">
    <conflict type="frameshift">
        <sequence resource="EMBL" id="BX823589"/>
    </conflict>
</comment>
<reference key="1">
    <citation type="submission" date="2017-04" db="EMBL/GenBank/DDBJ databases">
        <title>Arabidopsis glycosyltransferases: an update.</title>
        <authorList>
            <person name="Zeng W."/>
            <person name="Gluza P."/>
            <person name="Heazlewood J."/>
        </authorList>
    </citation>
    <scope>NUCLEOTIDE SEQUENCE [MRNA]</scope>
    <source>
        <strain>cv. Columbia</strain>
    </source>
</reference>
<reference key="2">
    <citation type="journal article" date="2000" name="Nature">
        <title>Sequence and analysis of chromosome 3 of the plant Arabidopsis thaliana.</title>
        <authorList>
            <person name="Salanoubat M."/>
            <person name="Lemcke K."/>
            <person name="Rieger M."/>
            <person name="Ansorge W."/>
            <person name="Unseld M."/>
            <person name="Fartmann B."/>
            <person name="Valle G."/>
            <person name="Bloecker H."/>
            <person name="Perez-Alonso M."/>
            <person name="Obermaier B."/>
            <person name="Delseny M."/>
            <person name="Boutry M."/>
            <person name="Grivell L.A."/>
            <person name="Mache R."/>
            <person name="Puigdomenech P."/>
            <person name="De Simone V."/>
            <person name="Choisne N."/>
            <person name="Artiguenave F."/>
            <person name="Robert C."/>
            <person name="Brottier P."/>
            <person name="Wincker P."/>
            <person name="Cattolico L."/>
            <person name="Weissenbach J."/>
            <person name="Saurin W."/>
            <person name="Quetier F."/>
            <person name="Schaefer M."/>
            <person name="Mueller-Auer S."/>
            <person name="Gabel C."/>
            <person name="Fuchs M."/>
            <person name="Benes V."/>
            <person name="Wurmbach E."/>
            <person name="Drzonek H."/>
            <person name="Erfle H."/>
            <person name="Jordan N."/>
            <person name="Bangert S."/>
            <person name="Wiedelmann R."/>
            <person name="Kranz H."/>
            <person name="Voss H."/>
            <person name="Holland R."/>
            <person name="Brandt P."/>
            <person name="Nyakatura G."/>
            <person name="Vezzi A."/>
            <person name="D'Angelo M."/>
            <person name="Pallavicini A."/>
            <person name="Toppo S."/>
            <person name="Simionati B."/>
            <person name="Conrad A."/>
            <person name="Hornischer K."/>
            <person name="Kauer G."/>
            <person name="Loehnert T.-H."/>
            <person name="Nordsiek G."/>
            <person name="Reichelt J."/>
            <person name="Scharfe M."/>
            <person name="Schoen O."/>
            <person name="Bargues M."/>
            <person name="Terol J."/>
            <person name="Climent J."/>
            <person name="Navarro P."/>
            <person name="Collado C."/>
            <person name="Perez-Perez A."/>
            <person name="Ottenwaelder B."/>
            <person name="Duchemin D."/>
            <person name="Cooke R."/>
            <person name="Laudie M."/>
            <person name="Berger-Llauro C."/>
            <person name="Purnelle B."/>
            <person name="Masuy D."/>
            <person name="de Haan M."/>
            <person name="Maarse A.C."/>
            <person name="Alcaraz J.-P."/>
            <person name="Cottet A."/>
            <person name="Casacuberta E."/>
            <person name="Monfort A."/>
            <person name="Argiriou A."/>
            <person name="Flores M."/>
            <person name="Liguori R."/>
            <person name="Vitale D."/>
            <person name="Mannhaupt G."/>
            <person name="Haase D."/>
            <person name="Schoof H."/>
            <person name="Rudd S."/>
            <person name="Zaccaria P."/>
            <person name="Mewes H.-W."/>
            <person name="Mayer K.F.X."/>
            <person name="Kaul S."/>
            <person name="Town C.D."/>
            <person name="Koo H.L."/>
            <person name="Tallon L.J."/>
            <person name="Jenkins J."/>
            <person name="Rooney T."/>
            <person name="Rizzo M."/>
            <person name="Walts A."/>
            <person name="Utterback T."/>
            <person name="Fujii C.Y."/>
            <person name="Shea T.P."/>
            <person name="Creasy T.H."/>
            <person name="Haas B."/>
            <person name="Maiti R."/>
            <person name="Wu D."/>
            <person name="Peterson J."/>
            <person name="Van Aken S."/>
            <person name="Pai G."/>
            <person name="Militscher J."/>
            <person name="Sellers P."/>
            <person name="Gill J.E."/>
            <person name="Feldblyum T.V."/>
            <person name="Preuss D."/>
            <person name="Lin X."/>
            <person name="Nierman W.C."/>
            <person name="Salzberg S.L."/>
            <person name="White O."/>
            <person name="Venter J.C."/>
            <person name="Fraser C.M."/>
            <person name="Kaneko T."/>
            <person name="Nakamura Y."/>
            <person name="Sato S."/>
            <person name="Kato T."/>
            <person name="Asamizu E."/>
            <person name="Sasamoto S."/>
            <person name="Kimura T."/>
            <person name="Idesawa K."/>
            <person name="Kawashima K."/>
            <person name="Kishida Y."/>
            <person name="Kiyokawa C."/>
            <person name="Kohara M."/>
            <person name="Matsumoto M."/>
            <person name="Matsuno A."/>
            <person name="Muraki A."/>
            <person name="Nakayama S."/>
            <person name="Nakazaki N."/>
            <person name="Shinpo S."/>
            <person name="Takeuchi C."/>
            <person name="Wada T."/>
            <person name="Watanabe A."/>
            <person name="Yamada M."/>
            <person name="Yasuda M."/>
            <person name="Tabata S."/>
        </authorList>
    </citation>
    <scope>NUCLEOTIDE SEQUENCE [LARGE SCALE GENOMIC DNA]</scope>
    <source>
        <strain>cv. Columbia</strain>
    </source>
</reference>
<reference key="3">
    <citation type="journal article" date="2017" name="Plant J.">
        <title>Araport11: a complete reannotation of the Arabidopsis thaliana reference genome.</title>
        <authorList>
            <person name="Cheng C.Y."/>
            <person name="Krishnakumar V."/>
            <person name="Chan A.P."/>
            <person name="Thibaud-Nissen F."/>
            <person name="Schobel S."/>
            <person name="Town C.D."/>
        </authorList>
    </citation>
    <scope>GENOME REANNOTATION</scope>
    <source>
        <strain>cv. Columbia</strain>
    </source>
</reference>
<reference key="4">
    <citation type="journal article" date="2004" name="Genome Res.">
        <title>Whole genome sequence comparisons and 'full-length' cDNA sequences: a combined approach to evaluate and improve Arabidopsis genome annotation.</title>
        <authorList>
            <person name="Castelli V."/>
            <person name="Aury J.-M."/>
            <person name="Jaillon O."/>
            <person name="Wincker P."/>
            <person name="Clepet C."/>
            <person name="Menard M."/>
            <person name="Cruaud C."/>
            <person name="Quetier F."/>
            <person name="Scarpelli C."/>
            <person name="Schaechter V."/>
            <person name="Temple G."/>
            <person name="Caboche M."/>
            <person name="Weissenbach J."/>
            <person name="Salanoubat M."/>
        </authorList>
    </citation>
    <scope>NUCLEOTIDE SEQUENCE [LARGE SCALE MRNA]</scope>
    <source>
        <strain>cv. Columbia</strain>
    </source>
</reference>
<reference key="5">
    <citation type="journal article" date="2012" name="Front. Plant Sci.">
        <title>Plant glycosyltransferases beyond CAZy: a perspective on DUF families.</title>
        <authorList>
            <person name="Hansen S.F."/>
            <person name="Harholt J."/>
            <person name="Oikawa A."/>
            <person name="Scheller H.V."/>
        </authorList>
    </citation>
    <scope>GENE FAMILY</scope>
    <scope>REVIEW</scope>
</reference>
<reference key="6">
    <citation type="journal article" date="2012" name="PLoS ONE">
        <title>The FRIABLE1 gene product affects cell adhesion in Arabidopsis.</title>
        <authorList>
            <person name="Neumetzler L."/>
            <person name="Humphrey T."/>
            <person name="Lumba S."/>
            <person name="Snyder S."/>
            <person name="Yeats T.H."/>
            <person name="Usadel B."/>
            <person name="Vasilevski A."/>
            <person name="Patel J."/>
            <person name="Rose J.K."/>
            <person name="Persson S."/>
            <person name="Bonetta D."/>
        </authorList>
    </citation>
    <scope>GENE FAMILY</scope>
</reference>
<reference key="7">
    <citation type="journal article" date="2012" name="PLoS ONE">
        <title>Identification of putative rhamnogalacturonan-II specific glycosyltransferases in Arabidopsis using a combination of bioinformatics approaches.</title>
        <authorList>
            <person name="Voxeur A."/>
            <person name="Andre A."/>
            <person name="Breton C."/>
            <person name="Lerouge P."/>
        </authorList>
    </citation>
    <scope>GENE FAMILY</scope>
</reference>
<reference key="8">
    <citation type="journal article" date="2013" name="Plant J.">
        <title>Identification of an additional protein involved in mannan biosynthesis.</title>
        <authorList>
            <person name="Wang Y."/>
            <person name="Mortimer J.C."/>
            <person name="Davis J."/>
            <person name="Dupree P."/>
            <person name="Keegstra K."/>
        </authorList>
    </citation>
    <scope>GENE FAMILY</scope>
</reference>
<reference key="9">
    <citation type="journal article" date="2014" name="Plant J.">
        <title>The plant glycosyltransferase clone collection for functional genomics.</title>
        <authorList>
            <person name="Lao J."/>
            <person name="Oikawa A."/>
            <person name="Bromley J.R."/>
            <person name="McInerney P."/>
            <person name="Suttangkakul A."/>
            <person name="Smith-Moritz A.M."/>
            <person name="Plahar H."/>
            <person name="Chiu T.-Y."/>
            <person name="Gonzalez Fernandez-Nino S.M.G."/>
            <person name="Ebert B."/>
            <person name="Yang F."/>
            <person name="Christiansen K.M."/>
            <person name="Hansen S.F."/>
            <person name="Stonebloom S."/>
            <person name="Adams P.D."/>
            <person name="Ronald P.C."/>
            <person name="Hillson N.J."/>
            <person name="Hadi M.Z."/>
            <person name="Vega-Sanchez M.E."/>
            <person name="Loque D."/>
            <person name="Scheller H.V."/>
            <person name="Heazlewood J.L."/>
        </authorList>
    </citation>
    <scope>WEB RESOURCE</scope>
</reference>
<feature type="chain" id="PRO_0000442090" description="O-fucosyltransferase 28">
    <location>
        <begin position="1"/>
        <end position="638"/>
    </location>
</feature>
<feature type="transmembrane region" description="Helical; Signal-anchor for type II membrane protein" evidence="5">
    <location>
        <begin position="125"/>
        <end position="145"/>
    </location>
</feature>
<feature type="region of interest" description="Disordered" evidence="4">
    <location>
        <begin position="49"/>
        <end position="74"/>
    </location>
</feature>
<feature type="region of interest" description="Disordered" evidence="4">
    <location>
        <begin position="613"/>
        <end position="638"/>
    </location>
</feature>
<feature type="compositionally biased region" description="Low complexity" evidence="4">
    <location>
        <begin position="61"/>
        <end position="74"/>
    </location>
</feature>
<feature type="binding site" evidence="1">
    <location>
        <begin position="390"/>
        <end position="392"/>
    </location>
    <ligand>
        <name>substrate</name>
    </ligand>
</feature>
<feature type="glycosylation site" description="N-linked (GlcNAc...) asparagine" evidence="3">
    <location>
        <position position="214"/>
    </location>
</feature>
<feature type="glycosylation site" description="N-linked (GlcNAc...) asparagine" evidence="3">
    <location>
        <position position="252"/>
    </location>
</feature>
<feature type="glycosylation site" description="N-linked (GlcNAc...) asparagine" evidence="3">
    <location>
        <position position="381"/>
    </location>
</feature>
<feature type="glycosylation site" description="N-linked (GlcNAc...) asparagine" evidence="3">
    <location>
        <position position="406"/>
    </location>
</feature>
<feature type="glycosylation site" description="N-linked (GlcNAc...) asparagine" evidence="3">
    <location>
        <position position="612"/>
    </location>
</feature>
<feature type="sequence conflict" description="In Ref. 4; BX823589." evidence="5" ref="4">
    <original>K</original>
    <variation>E</variation>
    <location>
        <position position="97"/>
    </location>
</feature>